<keyword id="KW-0028">Amino-acid biosynthesis</keyword>
<keyword id="KW-0963">Cytoplasm</keyword>
<keyword id="KW-0368">Histidine biosynthesis</keyword>
<keyword id="KW-0456">Lyase</keyword>
<evidence type="ECO:0000255" key="1">
    <source>
        <dbReference type="HAMAP-Rule" id="MF_00076"/>
    </source>
</evidence>
<accession>C4KHS1</accession>
<name>HIS7_SACI6</name>
<comment type="catalytic activity">
    <reaction evidence="1">
        <text>D-erythro-1-(imidazol-4-yl)glycerol 3-phosphate = 3-(imidazol-4-yl)-2-oxopropyl phosphate + H2O</text>
        <dbReference type="Rhea" id="RHEA:11040"/>
        <dbReference type="ChEBI" id="CHEBI:15377"/>
        <dbReference type="ChEBI" id="CHEBI:57766"/>
        <dbReference type="ChEBI" id="CHEBI:58278"/>
        <dbReference type="EC" id="4.2.1.19"/>
    </reaction>
</comment>
<comment type="pathway">
    <text evidence="1">Amino-acid biosynthesis; L-histidine biosynthesis; L-histidine from 5-phospho-alpha-D-ribose 1-diphosphate: step 6/9.</text>
</comment>
<comment type="subcellular location">
    <subcellularLocation>
        <location evidence="1">Cytoplasm</location>
    </subcellularLocation>
</comment>
<comment type="similarity">
    <text evidence="1">Belongs to the imidazoleglycerol-phosphate dehydratase family.</text>
</comment>
<organism>
    <name type="scientific">Saccharolobus islandicus (strain M.16.4 / Kamchatka #3)</name>
    <name type="common">Sulfolobus islandicus</name>
    <dbReference type="NCBI Taxonomy" id="426118"/>
    <lineage>
        <taxon>Archaea</taxon>
        <taxon>Thermoproteota</taxon>
        <taxon>Thermoprotei</taxon>
        <taxon>Sulfolobales</taxon>
        <taxon>Sulfolobaceae</taxon>
        <taxon>Saccharolobus</taxon>
    </lineage>
</organism>
<dbReference type="EC" id="4.2.1.19" evidence="1"/>
<dbReference type="EMBL" id="CP001402">
    <property type="protein sequence ID" value="ACR42135.1"/>
    <property type="molecule type" value="Genomic_DNA"/>
</dbReference>
<dbReference type="RefSeq" id="WP_012711531.1">
    <property type="nucleotide sequence ID" value="NC_012726.1"/>
</dbReference>
<dbReference type="SMR" id="C4KHS1"/>
<dbReference type="GeneID" id="15297925"/>
<dbReference type="KEGG" id="sid:M164_1534"/>
<dbReference type="HOGENOM" id="CLU_044308_3_0_2"/>
<dbReference type="UniPathway" id="UPA00031">
    <property type="reaction ID" value="UER00011"/>
</dbReference>
<dbReference type="Proteomes" id="UP000001479">
    <property type="component" value="Chromosome"/>
</dbReference>
<dbReference type="GO" id="GO:0005737">
    <property type="term" value="C:cytoplasm"/>
    <property type="evidence" value="ECO:0007669"/>
    <property type="project" value="UniProtKB-SubCell"/>
</dbReference>
<dbReference type="GO" id="GO:0004424">
    <property type="term" value="F:imidazoleglycerol-phosphate dehydratase activity"/>
    <property type="evidence" value="ECO:0007669"/>
    <property type="project" value="UniProtKB-UniRule"/>
</dbReference>
<dbReference type="GO" id="GO:0000105">
    <property type="term" value="P:L-histidine biosynthetic process"/>
    <property type="evidence" value="ECO:0007669"/>
    <property type="project" value="UniProtKB-UniRule"/>
</dbReference>
<dbReference type="CDD" id="cd07914">
    <property type="entry name" value="IGPD"/>
    <property type="match status" value="1"/>
</dbReference>
<dbReference type="FunFam" id="3.30.230.40:FF:000001">
    <property type="entry name" value="Imidazoleglycerol-phosphate dehydratase HisB"/>
    <property type="match status" value="1"/>
</dbReference>
<dbReference type="FunFam" id="3.30.230.40:FF:000003">
    <property type="entry name" value="Imidazoleglycerol-phosphate dehydratase HisB"/>
    <property type="match status" value="1"/>
</dbReference>
<dbReference type="Gene3D" id="3.30.230.40">
    <property type="entry name" value="Imidazole glycerol phosphate dehydratase, domain 1"/>
    <property type="match status" value="2"/>
</dbReference>
<dbReference type="HAMAP" id="MF_00076">
    <property type="entry name" value="HisB"/>
    <property type="match status" value="1"/>
</dbReference>
<dbReference type="InterPro" id="IPR038494">
    <property type="entry name" value="IGPD_sf"/>
</dbReference>
<dbReference type="InterPro" id="IPR000807">
    <property type="entry name" value="ImidazoleglycerolP_deHydtase"/>
</dbReference>
<dbReference type="InterPro" id="IPR020565">
    <property type="entry name" value="ImidazoleglycerP_deHydtase_CS"/>
</dbReference>
<dbReference type="InterPro" id="IPR020568">
    <property type="entry name" value="Ribosomal_Su5_D2-typ_SF"/>
</dbReference>
<dbReference type="NCBIfam" id="NF002114">
    <property type="entry name" value="PRK00951.2-4"/>
    <property type="match status" value="1"/>
</dbReference>
<dbReference type="NCBIfam" id="NF010121">
    <property type="entry name" value="PRK13598.1"/>
    <property type="match status" value="1"/>
</dbReference>
<dbReference type="PANTHER" id="PTHR23133:SF2">
    <property type="entry name" value="IMIDAZOLEGLYCEROL-PHOSPHATE DEHYDRATASE"/>
    <property type="match status" value="1"/>
</dbReference>
<dbReference type="PANTHER" id="PTHR23133">
    <property type="entry name" value="IMIDAZOLEGLYCEROL-PHOSPHATE DEHYDRATASE HIS7"/>
    <property type="match status" value="1"/>
</dbReference>
<dbReference type="Pfam" id="PF00475">
    <property type="entry name" value="IGPD"/>
    <property type="match status" value="1"/>
</dbReference>
<dbReference type="SUPFAM" id="SSF54211">
    <property type="entry name" value="Ribosomal protein S5 domain 2-like"/>
    <property type="match status" value="2"/>
</dbReference>
<dbReference type="PROSITE" id="PS00954">
    <property type="entry name" value="IGP_DEHYDRATASE_1"/>
    <property type="match status" value="1"/>
</dbReference>
<dbReference type="PROSITE" id="PS00955">
    <property type="entry name" value="IGP_DEHYDRATASE_2"/>
    <property type="match status" value="1"/>
</dbReference>
<proteinExistence type="inferred from homology"/>
<feature type="chain" id="PRO_1000202519" description="Imidazoleglycerol-phosphate dehydratase">
    <location>
        <begin position="1"/>
        <end position="193"/>
    </location>
</feature>
<sequence length="193" mass="21494">MARNANITRETKETKIEVFLDIDRKGEIKVSTPVPFFNHMLITLLTYMNSTATVSATDKLPYDDHHIIEDVAITLGLAIKEALGDKRGIKRFSHQIIPMDEALVLVSLDISNRGIAFVNLNLKRSEIGGLATENIPHFFQSFAYNSGVTLHISQLSGYNTHHIIEASFKALGLALYEATRIVDNEIRSTKGVI</sequence>
<reference key="1">
    <citation type="journal article" date="2009" name="Proc. Natl. Acad. Sci. U.S.A.">
        <title>Biogeography of the Sulfolobus islandicus pan-genome.</title>
        <authorList>
            <person name="Reno M.L."/>
            <person name="Held N.L."/>
            <person name="Fields C.J."/>
            <person name="Burke P.V."/>
            <person name="Whitaker R.J."/>
        </authorList>
    </citation>
    <scope>NUCLEOTIDE SEQUENCE [LARGE SCALE GENOMIC DNA]</scope>
    <source>
        <strain>M.16.4 / Kamchatka #3</strain>
    </source>
</reference>
<protein>
    <recommendedName>
        <fullName evidence="1">Imidazoleglycerol-phosphate dehydratase</fullName>
        <shortName evidence="1">IGPD</shortName>
        <ecNumber evidence="1">4.2.1.19</ecNumber>
    </recommendedName>
</protein>
<gene>
    <name evidence="1" type="primary">hisB</name>
    <name type="ordered locus">M164_1534</name>
</gene>